<name>HTPX_ECOSE</name>
<sequence length="293" mass="31957">MMRIALFLLTNLAVMVVFGLVLSLTGIQSSSVQGLMIMALLFGFGGSFVSLLMSKWMALRSVGGEVIEQPRNERERWLVNTVATQARQAGIAMPQVAIYHAPDINAFATGARRDASLVAVSTGLLQNMSPDEAEAVIAHEISHIANGDMVTMTLIQGVVNTFVIFISRILAQLAAGFMGGNRDEGEESNGNPLIYFAVATVLELVFGILASIITMWFSRHREFHADAGSAKLVGREKMIAALQRLKTSYEPQEATSMMAFCINGKSKSLSELFMTHPPLDKRIEALRTGEYLK</sequence>
<reference key="1">
    <citation type="journal article" date="2008" name="DNA Res.">
        <title>Complete genome sequence and comparative analysis of the wild-type commensal Escherichia coli strain SE11 isolated from a healthy adult.</title>
        <authorList>
            <person name="Oshima K."/>
            <person name="Toh H."/>
            <person name="Ogura Y."/>
            <person name="Sasamoto H."/>
            <person name="Morita H."/>
            <person name="Park S.-H."/>
            <person name="Ooka T."/>
            <person name="Iyoda S."/>
            <person name="Taylor T.D."/>
            <person name="Hayashi T."/>
            <person name="Itoh K."/>
            <person name="Hattori M."/>
        </authorList>
    </citation>
    <scope>NUCLEOTIDE SEQUENCE [LARGE SCALE GENOMIC DNA]</scope>
    <source>
        <strain>SE11</strain>
    </source>
</reference>
<evidence type="ECO:0000255" key="1">
    <source>
        <dbReference type="HAMAP-Rule" id="MF_00188"/>
    </source>
</evidence>
<keyword id="KW-0997">Cell inner membrane</keyword>
<keyword id="KW-1003">Cell membrane</keyword>
<keyword id="KW-0378">Hydrolase</keyword>
<keyword id="KW-0472">Membrane</keyword>
<keyword id="KW-0479">Metal-binding</keyword>
<keyword id="KW-0482">Metalloprotease</keyword>
<keyword id="KW-0645">Protease</keyword>
<keyword id="KW-0346">Stress response</keyword>
<keyword id="KW-0812">Transmembrane</keyword>
<keyword id="KW-1133">Transmembrane helix</keyword>
<keyword id="KW-0862">Zinc</keyword>
<gene>
    <name evidence="1" type="primary">htpX</name>
    <name type="ordered locus">ECSE_2004</name>
</gene>
<proteinExistence type="inferred from homology"/>
<organism>
    <name type="scientific">Escherichia coli (strain SE11)</name>
    <dbReference type="NCBI Taxonomy" id="409438"/>
    <lineage>
        <taxon>Bacteria</taxon>
        <taxon>Pseudomonadati</taxon>
        <taxon>Pseudomonadota</taxon>
        <taxon>Gammaproteobacteria</taxon>
        <taxon>Enterobacterales</taxon>
        <taxon>Enterobacteriaceae</taxon>
        <taxon>Escherichia</taxon>
    </lineage>
</organism>
<feature type="chain" id="PRO_1000098818" description="Protease HtpX">
    <location>
        <begin position="1"/>
        <end position="293"/>
    </location>
</feature>
<feature type="transmembrane region" description="Helical" evidence="1">
    <location>
        <begin position="4"/>
        <end position="24"/>
    </location>
</feature>
<feature type="transmembrane region" description="Helical" evidence="1">
    <location>
        <begin position="34"/>
        <end position="54"/>
    </location>
</feature>
<feature type="transmembrane region" description="Helical" evidence="1">
    <location>
        <begin position="158"/>
        <end position="178"/>
    </location>
</feature>
<feature type="transmembrane region" description="Helical" evidence="1">
    <location>
        <begin position="193"/>
        <end position="213"/>
    </location>
</feature>
<feature type="active site" evidence="1">
    <location>
        <position position="140"/>
    </location>
</feature>
<feature type="binding site" evidence="1">
    <location>
        <position position="139"/>
    </location>
    <ligand>
        <name>Zn(2+)</name>
        <dbReference type="ChEBI" id="CHEBI:29105"/>
        <note>catalytic</note>
    </ligand>
</feature>
<feature type="binding site" evidence="1">
    <location>
        <position position="143"/>
    </location>
    <ligand>
        <name>Zn(2+)</name>
        <dbReference type="ChEBI" id="CHEBI:29105"/>
        <note>catalytic</note>
    </ligand>
</feature>
<feature type="binding site" evidence="1">
    <location>
        <position position="222"/>
    </location>
    <ligand>
        <name>Zn(2+)</name>
        <dbReference type="ChEBI" id="CHEBI:29105"/>
        <note>catalytic</note>
    </ligand>
</feature>
<protein>
    <recommendedName>
        <fullName evidence="1">Protease HtpX</fullName>
        <ecNumber evidence="1">3.4.24.-</ecNumber>
    </recommendedName>
    <alternativeName>
        <fullName evidence="1">Heat shock protein HtpX</fullName>
    </alternativeName>
</protein>
<accession>B6IBQ7</accession>
<dbReference type="EC" id="3.4.24.-" evidence="1"/>
<dbReference type="EMBL" id="AP009240">
    <property type="protein sequence ID" value="BAG77528.1"/>
    <property type="molecule type" value="Genomic_DNA"/>
</dbReference>
<dbReference type="RefSeq" id="WP_000984517.1">
    <property type="nucleotide sequence ID" value="NC_011415.1"/>
</dbReference>
<dbReference type="SMR" id="B6IBQ7"/>
<dbReference type="MEROPS" id="M48.002"/>
<dbReference type="GeneID" id="93776079"/>
<dbReference type="KEGG" id="ecy:ECSE_2004"/>
<dbReference type="HOGENOM" id="CLU_042266_1_0_6"/>
<dbReference type="Proteomes" id="UP000008199">
    <property type="component" value="Chromosome"/>
</dbReference>
<dbReference type="GO" id="GO:0005886">
    <property type="term" value="C:plasma membrane"/>
    <property type="evidence" value="ECO:0007669"/>
    <property type="project" value="UniProtKB-SubCell"/>
</dbReference>
<dbReference type="GO" id="GO:0004222">
    <property type="term" value="F:metalloendopeptidase activity"/>
    <property type="evidence" value="ECO:0007669"/>
    <property type="project" value="UniProtKB-UniRule"/>
</dbReference>
<dbReference type="GO" id="GO:0008270">
    <property type="term" value="F:zinc ion binding"/>
    <property type="evidence" value="ECO:0007669"/>
    <property type="project" value="UniProtKB-UniRule"/>
</dbReference>
<dbReference type="GO" id="GO:0006508">
    <property type="term" value="P:proteolysis"/>
    <property type="evidence" value="ECO:0007669"/>
    <property type="project" value="UniProtKB-KW"/>
</dbReference>
<dbReference type="CDD" id="cd07335">
    <property type="entry name" value="M48B_HtpX_like"/>
    <property type="match status" value="1"/>
</dbReference>
<dbReference type="FunFam" id="3.30.2010.10:FF:000001">
    <property type="entry name" value="Protease HtpX"/>
    <property type="match status" value="1"/>
</dbReference>
<dbReference type="Gene3D" id="3.30.2010.10">
    <property type="entry name" value="Metalloproteases ('zincins'), catalytic domain"/>
    <property type="match status" value="1"/>
</dbReference>
<dbReference type="HAMAP" id="MF_00188">
    <property type="entry name" value="Pept_M48_protease_HtpX"/>
    <property type="match status" value="1"/>
</dbReference>
<dbReference type="InterPro" id="IPR050083">
    <property type="entry name" value="HtpX_protease"/>
</dbReference>
<dbReference type="InterPro" id="IPR022919">
    <property type="entry name" value="Pept_M48_protease_HtpX"/>
</dbReference>
<dbReference type="InterPro" id="IPR001915">
    <property type="entry name" value="Peptidase_M48"/>
</dbReference>
<dbReference type="NCBIfam" id="NF003965">
    <property type="entry name" value="PRK05457.1"/>
    <property type="match status" value="1"/>
</dbReference>
<dbReference type="PANTHER" id="PTHR43221">
    <property type="entry name" value="PROTEASE HTPX"/>
    <property type="match status" value="1"/>
</dbReference>
<dbReference type="PANTHER" id="PTHR43221:SF1">
    <property type="entry name" value="PROTEASE HTPX"/>
    <property type="match status" value="1"/>
</dbReference>
<dbReference type="Pfam" id="PF01435">
    <property type="entry name" value="Peptidase_M48"/>
    <property type="match status" value="1"/>
</dbReference>
<comment type="cofactor">
    <cofactor evidence="1">
        <name>Zn(2+)</name>
        <dbReference type="ChEBI" id="CHEBI:29105"/>
    </cofactor>
    <text evidence="1">Binds 1 zinc ion per subunit.</text>
</comment>
<comment type="subcellular location">
    <subcellularLocation>
        <location evidence="1">Cell inner membrane</location>
        <topology evidence="1">Multi-pass membrane protein</topology>
    </subcellularLocation>
</comment>
<comment type="similarity">
    <text evidence="1">Belongs to the peptidase M48B family.</text>
</comment>